<sequence>MFAVIETGGKQYLVKEGSIIKVEKLEAEEKKEVEINKVICISNNGLSYSSNATVKAEVLEQCRGEKIIIFKKKRRKNYRRKTGHRQYITVLRINEISLQK</sequence>
<gene>
    <name evidence="1" type="primary">rplU</name>
    <name type="ordered locus">WRi_001180</name>
</gene>
<organism>
    <name type="scientific">Wolbachia sp. subsp. Drosophila simulans (strain wRi)</name>
    <dbReference type="NCBI Taxonomy" id="66084"/>
    <lineage>
        <taxon>Bacteria</taxon>
        <taxon>Pseudomonadati</taxon>
        <taxon>Pseudomonadota</taxon>
        <taxon>Alphaproteobacteria</taxon>
        <taxon>Rickettsiales</taxon>
        <taxon>Anaplasmataceae</taxon>
        <taxon>Wolbachieae</taxon>
        <taxon>Wolbachia</taxon>
    </lineage>
</organism>
<proteinExistence type="inferred from homology"/>
<name>RL21_WOLWR</name>
<evidence type="ECO:0000255" key="1">
    <source>
        <dbReference type="HAMAP-Rule" id="MF_01363"/>
    </source>
</evidence>
<evidence type="ECO:0000305" key="2"/>
<reference key="1">
    <citation type="journal article" date="2009" name="Proc. Natl. Acad. Sci. U.S.A.">
        <title>The mosaic genome structure of the Wolbachia wRi strain infecting Drosophila simulans.</title>
        <authorList>
            <person name="Klasson L."/>
            <person name="Westberg J."/>
            <person name="Sapountzis P."/>
            <person name="Naeslund K."/>
            <person name="Lutnaes Y."/>
            <person name="Darby A.C."/>
            <person name="Veneti Z."/>
            <person name="Chen L."/>
            <person name="Braig H.R."/>
            <person name="Garrett R."/>
            <person name="Bourtzis K."/>
            <person name="Andersson S.G."/>
        </authorList>
    </citation>
    <scope>NUCLEOTIDE SEQUENCE [LARGE SCALE GENOMIC DNA]</scope>
    <source>
        <strain>wRi</strain>
    </source>
</reference>
<comment type="function">
    <text evidence="1">This protein binds to 23S rRNA in the presence of protein L20.</text>
</comment>
<comment type="subunit">
    <text evidence="1">Part of the 50S ribosomal subunit. Contacts protein L20.</text>
</comment>
<comment type="similarity">
    <text evidence="1">Belongs to the bacterial ribosomal protein bL21 family.</text>
</comment>
<keyword id="KW-0687">Ribonucleoprotein</keyword>
<keyword id="KW-0689">Ribosomal protein</keyword>
<keyword id="KW-0694">RNA-binding</keyword>
<keyword id="KW-0699">rRNA-binding</keyword>
<feature type="chain" id="PRO_1000166752" description="Large ribosomal subunit protein bL21">
    <location>
        <begin position="1"/>
        <end position="100"/>
    </location>
</feature>
<accession>C0R5C9</accession>
<protein>
    <recommendedName>
        <fullName evidence="1">Large ribosomal subunit protein bL21</fullName>
    </recommendedName>
    <alternativeName>
        <fullName evidence="2">50S ribosomal protein L21</fullName>
    </alternativeName>
</protein>
<dbReference type="EMBL" id="CP001391">
    <property type="protein sequence ID" value="ACN94971.1"/>
    <property type="molecule type" value="Genomic_DNA"/>
</dbReference>
<dbReference type="RefSeq" id="WP_006279565.1">
    <property type="nucleotide sequence ID" value="NZ_MKIF01000090.1"/>
</dbReference>
<dbReference type="SMR" id="C0R5C9"/>
<dbReference type="STRING" id="66084.WRi_001180"/>
<dbReference type="KEGG" id="wri:WRi_001180"/>
<dbReference type="HOGENOM" id="CLU_061463_3_2_5"/>
<dbReference type="Proteomes" id="UP000001293">
    <property type="component" value="Chromosome"/>
</dbReference>
<dbReference type="GO" id="GO:0005737">
    <property type="term" value="C:cytoplasm"/>
    <property type="evidence" value="ECO:0007669"/>
    <property type="project" value="UniProtKB-ARBA"/>
</dbReference>
<dbReference type="GO" id="GO:1990904">
    <property type="term" value="C:ribonucleoprotein complex"/>
    <property type="evidence" value="ECO:0007669"/>
    <property type="project" value="UniProtKB-KW"/>
</dbReference>
<dbReference type="GO" id="GO:0005840">
    <property type="term" value="C:ribosome"/>
    <property type="evidence" value="ECO:0007669"/>
    <property type="project" value="UniProtKB-KW"/>
</dbReference>
<dbReference type="GO" id="GO:0019843">
    <property type="term" value="F:rRNA binding"/>
    <property type="evidence" value="ECO:0007669"/>
    <property type="project" value="UniProtKB-UniRule"/>
</dbReference>
<dbReference type="GO" id="GO:0003735">
    <property type="term" value="F:structural constituent of ribosome"/>
    <property type="evidence" value="ECO:0007669"/>
    <property type="project" value="InterPro"/>
</dbReference>
<dbReference type="GO" id="GO:0006412">
    <property type="term" value="P:translation"/>
    <property type="evidence" value="ECO:0007669"/>
    <property type="project" value="UniProtKB-UniRule"/>
</dbReference>
<dbReference type="HAMAP" id="MF_01363">
    <property type="entry name" value="Ribosomal_bL21"/>
    <property type="match status" value="1"/>
</dbReference>
<dbReference type="InterPro" id="IPR028909">
    <property type="entry name" value="bL21-like"/>
</dbReference>
<dbReference type="InterPro" id="IPR036164">
    <property type="entry name" value="bL21-like_sf"/>
</dbReference>
<dbReference type="InterPro" id="IPR001787">
    <property type="entry name" value="Ribosomal_bL21"/>
</dbReference>
<dbReference type="InterPro" id="IPR018258">
    <property type="entry name" value="Ribosomal_bL21_CS"/>
</dbReference>
<dbReference type="NCBIfam" id="TIGR00061">
    <property type="entry name" value="L21"/>
    <property type="match status" value="1"/>
</dbReference>
<dbReference type="PANTHER" id="PTHR21349">
    <property type="entry name" value="50S RIBOSOMAL PROTEIN L21"/>
    <property type="match status" value="1"/>
</dbReference>
<dbReference type="PANTHER" id="PTHR21349:SF0">
    <property type="entry name" value="LARGE RIBOSOMAL SUBUNIT PROTEIN BL21M"/>
    <property type="match status" value="1"/>
</dbReference>
<dbReference type="Pfam" id="PF00829">
    <property type="entry name" value="Ribosomal_L21p"/>
    <property type="match status" value="1"/>
</dbReference>
<dbReference type="SUPFAM" id="SSF141091">
    <property type="entry name" value="L21p-like"/>
    <property type="match status" value="1"/>
</dbReference>
<dbReference type="PROSITE" id="PS01169">
    <property type="entry name" value="RIBOSOMAL_L21"/>
    <property type="match status" value="1"/>
</dbReference>